<keyword id="KW-0521">NADP</keyword>
<keyword id="KW-0560">Oxidoreductase</keyword>
<keyword id="KW-1185">Reference proteome</keyword>
<comment type="function">
    <text evidence="4 6">Short chain dehydrogenase; part of the gene cluster that mediates the biosynthesis of the aspoquinolone mycotoxins (PubMed:25251934). The role of asqE within the aspoquinolone pathway has still to be determined (Probable). The first step of the pathway is catalyzed by the nonribosomal peptide synthetase asqK that condenses anthranilic acid and O-methyl-L-tyrosine to produce 4'-methoxycyclopeptin. 4'-methoxycyclopeptin is then converted to 4'-methoxydehydrocyclopeptin by the ketoglutarate-dependent dioxygenase asqJ. AsqJ also converts its first product 4'-methoxydehydrocyclopeptin to 4'-methoxycyclopenin. The following conversion of 4'-methoxycyclopenin into 4'-methoxyviridicatin is catalyzed by the cyclopenase asqI. 4'-methoxyviridicatin is the precursor of quinolone natural products, and is further converted to quinolinone B. The prenyltransferase asqH1 then catalyzes the canonical Friedel-Crafts alkylation of quinolinone B with dimethylallyl cation to yield dimethylallyl quinolone, which is subjected to FAD-dependent dehydrogenation by the FAD-linked oxidoreductase asqF to yield conjugated aryl diene. The delta(3') double bond then serves as the site of the second alkylation with DMAPP catalyzed by the prenyltransferase asqH2 to yield a carbenium ion intermediate, which can be attacked by H(2)O to yield a styrenyl quinolone containing a C3'-hydroxyprenyl chain. The FAD-dependent monooxygenase asqG performs epoxidation of the terminal C7'-C8' olefin. Finally, after dehydratation of the epoxide at C3 by asqC, the quinolone epoxide rearrangement protein asqO catalyzes an enzymatic 3-exo-tet cyclization to yield the cyclopropyl-THF ring system in aspoquinolone (Probable).</text>
</comment>
<comment type="catalytic activity">
    <reaction evidence="3">
        <text>a primary alcohol + NAD(+) = an aldehyde + NADH + H(+)</text>
        <dbReference type="Rhea" id="RHEA:10736"/>
        <dbReference type="ChEBI" id="CHEBI:15378"/>
        <dbReference type="ChEBI" id="CHEBI:15734"/>
        <dbReference type="ChEBI" id="CHEBI:17478"/>
        <dbReference type="ChEBI" id="CHEBI:57540"/>
        <dbReference type="ChEBI" id="CHEBI:57945"/>
        <dbReference type="EC" id="1.1.1.1"/>
    </reaction>
</comment>
<comment type="catalytic activity">
    <reaction evidence="3">
        <text>a secondary alcohol + NAD(+) = a ketone + NADH + H(+)</text>
        <dbReference type="Rhea" id="RHEA:10740"/>
        <dbReference type="ChEBI" id="CHEBI:15378"/>
        <dbReference type="ChEBI" id="CHEBI:17087"/>
        <dbReference type="ChEBI" id="CHEBI:35681"/>
        <dbReference type="ChEBI" id="CHEBI:57540"/>
        <dbReference type="ChEBI" id="CHEBI:57945"/>
        <dbReference type="EC" id="1.1.1.1"/>
    </reaction>
</comment>
<comment type="pathway">
    <text evidence="7">Secondary metabolite biosynthesis.</text>
</comment>
<comment type="pathway">
    <text evidence="7">Alkaloid biosynthesis.</text>
</comment>
<comment type="pathway">
    <text evidence="7">Mycotoxin biosynthesis.</text>
</comment>
<comment type="similarity">
    <text evidence="6">Belongs to the short-chain dehydrogenases/reductases (SDR) family.</text>
</comment>
<gene>
    <name evidence="5" type="primary">asqE</name>
    <name type="ORF">AN9232</name>
</gene>
<sequence length="271" mass="28147">MTQAPWSLARKTAIVTGGSRGIGRAIAIHLTCKGLSKLAITYISNLAAAESTLDECRKNGLGMGIAIKADLLDPNIGHGLVQQALAGLETPTIDILVNNAAYLDPSEAASVEELTLPVFQKVMQANAFAPISIISATMPHLPVSGGRVINISSAAAKLANPGPVMTYGASKAALDSFTRSLAAEFATDKAATFNTVCVGPTVTDGFHVVGKLYPEGFMEELAKAFTAAQRVGMPQDIAFIVGFLAGEEARWVNGACMSANGGFREVLPALS</sequence>
<feature type="chain" id="PRO_0000437617" description="Short chain dehydrogenase asqE">
    <location>
        <begin position="1"/>
        <end position="271"/>
    </location>
</feature>
<feature type="active site" description="Proton donor" evidence="2">
    <location>
        <position position="152"/>
    </location>
</feature>
<feature type="active site" description="Proton donor" evidence="2">
    <location>
        <position position="153"/>
    </location>
</feature>
<feature type="active site" description="Proton acceptor" evidence="3">
    <location>
        <position position="167"/>
    </location>
</feature>
<feature type="active site" description="Lowers pKa of active site Tyr" evidence="2">
    <location>
        <position position="171"/>
    </location>
</feature>
<feature type="binding site" evidence="1">
    <location>
        <position position="22"/>
    </location>
    <ligand>
        <name>NADP(+)</name>
        <dbReference type="ChEBI" id="CHEBI:58349"/>
    </ligand>
</feature>
<feature type="binding site" evidence="1">
    <location>
        <position position="70"/>
    </location>
    <ligand>
        <name>NADP(+)</name>
        <dbReference type="ChEBI" id="CHEBI:58349"/>
    </ligand>
</feature>
<feature type="binding site" evidence="2">
    <location>
        <position position="99"/>
    </location>
    <ligand>
        <name>NADP(+)</name>
        <dbReference type="ChEBI" id="CHEBI:58349"/>
    </ligand>
</feature>
<feature type="binding site" evidence="2">
    <location>
        <position position="167"/>
    </location>
    <ligand>
        <name>NADP(+)</name>
        <dbReference type="ChEBI" id="CHEBI:58349"/>
    </ligand>
</feature>
<feature type="binding site" evidence="2">
    <location>
        <position position="171"/>
    </location>
    <ligand>
        <name>NADP(+)</name>
        <dbReference type="ChEBI" id="CHEBI:58349"/>
    </ligand>
</feature>
<feature type="binding site" evidence="1">
    <location>
        <position position="203"/>
    </location>
    <ligand>
        <name>NADP(+)</name>
        <dbReference type="ChEBI" id="CHEBI:58349"/>
    </ligand>
</feature>
<accession>Q5AR48</accession>
<accession>C8VJP7</accession>
<name>ASQE_EMENI</name>
<reference key="1">
    <citation type="journal article" date="2005" name="Nature">
        <title>Sequencing of Aspergillus nidulans and comparative analysis with A. fumigatus and A. oryzae.</title>
        <authorList>
            <person name="Galagan J.E."/>
            <person name="Calvo S.E."/>
            <person name="Cuomo C."/>
            <person name="Ma L.-J."/>
            <person name="Wortman J.R."/>
            <person name="Batzoglou S."/>
            <person name="Lee S.-I."/>
            <person name="Bastuerkmen M."/>
            <person name="Spevak C.C."/>
            <person name="Clutterbuck J."/>
            <person name="Kapitonov V."/>
            <person name="Jurka J."/>
            <person name="Scazzocchio C."/>
            <person name="Farman M.L."/>
            <person name="Butler J."/>
            <person name="Purcell S."/>
            <person name="Harris S."/>
            <person name="Braus G.H."/>
            <person name="Draht O."/>
            <person name="Busch S."/>
            <person name="D'Enfert C."/>
            <person name="Bouchier C."/>
            <person name="Goldman G.H."/>
            <person name="Bell-Pedersen D."/>
            <person name="Griffiths-Jones S."/>
            <person name="Doonan J.H."/>
            <person name="Yu J."/>
            <person name="Vienken K."/>
            <person name="Pain A."/>
            <person name="Freitag M."/>
            <person name="Selker E.U."/>
            <person name="Archer D.B."/>
            <person name="Penalva M.A."/>
            <person name="Oakley B.R."/>
            <person name="Momany M."/>
            <person name="Tanaka T."/>
            <person name="Kumagai T."/>
            <person name="Asai K."/>
            <person name="Machida M."/>
            <person name="Nierman W.C."/>
            <person name="Denning D.W."/>
            <person name="Caddick M.X."/>
            <person name="Hynes M."/>
            <person name="Paoletti M."/>
            <person name="Fischer R."/>
            <person name="Miller B.L."/>
            <person name="Dyer P.S."/>
            <person name="Sachs M.S."/>
            <person name="Osmani S.A."/>
            <person name="Birren B.W."/>
        </authorList>
    </citation>
    <scope>NUCLEOTIDE SEQUENCE [LARGE SCALE GENOMIC DNA]</scope>
    <source>
        <strain>FGSC A4 / ATCC 38163 / CBS 112.46 / NRRL 194 / M139</strain>
    </source>
</reference>
<reference key="2">
    <citation type="journal article" date="2009" name="Fungal Genet. Biol.">
        <title>The 2008 update of the Aspergillus nidulans genome annotation: a community effort.</title>
        <authorList>
            <person name="Wortman J.R."/>
            <person name="Gilsenan J.M."/>
            <person name="Joardar V."/>
            <person name="Deegan J."/>
            <person name="Clutterbuck J."/>
            <person name="Andersen M.R."/>
            <person name="Archer D."/>
            <person name="Bencina M."/>
            <person name="Braus G."/>
            <person name="Coutinho P."/>
            <person name="von Dohren H."/>
            <person name="Doonan J."/>
            <person name="Driessen A.J."/>
            <person name="Durek P."/>
            <person name="Espeso E."/>
            <person name="Fekete E."/>
            <person name="Flipphi M."/>
            <person name="Estrada C.G."/>
            <person name="Geysens S."/>
            <person name="Goldman G."/>
            <person name="de Groot P.W."/>
            <person name="Hansen K."/>
            <person name="Harris S.D."/>
            <person name="Heinekamp T."/>
            <person name="Helmstaedt K."/>
            <person name="Henrissat B."/>
            <person name="Hofmann G."/>
            <person name="Homan T."/>
            <person name="Horio T."/>
            <person name="Horiuchi H."/>
            <person name="James S."/>
            <person name="Jones M."/>
            <person name="Karaffa L."/>
            <person name="Karanyi Z."/>
            <person name="Kato M."/>
            <person name="Keller N."/>
            <person name="Kelly D.E."/>
            <person name="Kiel J.A."/>
            <person name="Kim J.M."/>
            <person name="van der Klei I.J."/>
            <person name="Klis F.M."/>
            <person name="Kovalchuk A."/>
            <person name="Krasevec N."/>
            <person name="Kubicek C.P."/>
            <person name="Liu B."/>
            <person name="Maccabe A."/>
            <person name="Meyer V."/>
            <person name="Mirabito P."/>
            <person name="Miskei M."/>
            <person name="Mos M."/>
            <person name="Mullins J."/>
            <person name="Nelson D.R."/>
            <person name="Nielsen J."/>
            <person name="Oakley B.R."/>
            <person name="Osmani S.A."/>
            <person name="Pakula T."/>
            <person name="Paszewski A."/>
            <person name="Paulsen I."/>
            <person name="Pilsyk S."/>
            <person name="Pocsi I."/>
            <person name="Punt P.J."/>
            <person name="Ram A.F."/>
            <person name="Ren Q."/>
            <person name="Robellet X."/>
            <person name="Robson G."/>
            <person name="Seiboth B."/>
            <person name="van Solingen P."/>
            <person name="Specht T."/>
            <person name="Sun J."/>
            <person name="Taheri-Talesh N."/>
            <person name="Takeshita N."/>
            <person name="Ussery D."/>
            <person name="vanKuyk P.A."/>
            <person name="Visser H."/>
            <person name="van de Vondervoort P.J."/>
            <person name="de Vries R.P."/>
            <person name="Walton J."/>
            <person name="Xiang X."/>
            <person name="Xiong Y."/>
            <person name="Zeng A.P."/>
            <person name="Brandt B.W."/>
            <person name="Cornell M.J."/>
            <person name="van den Hondel C.A."/>
            <person name="Visser J."/>
            <person name="Oliver S.G."/>
            <person name="Turner G."/>
        </authorList>
    </citation>
    <scope>GENOME REANNOTATION</scope>
    <source>
        <strain>FGSC A4 / ATCC 38163 / CBS 112.46 / NRRL 194 / M139</strain>
    </source>
</reference>
<reference key="3">
    <citation type="journal article" date="2014" name="Angew. Chem. Int. Ed.">
        <title>Non-heme dioxygenase catalyzes atypical oxidations of 6,7-bicyclic systems to form the 6,6-quinolone core of viridicatin-type fungal alkaloids.</title>
        <authorList>
            <person name="Ishikawa N."/>
            <person name="Tanaka H."/>
            <person name="Koyama F."/>
            <person name="Noguchi H."/>
            <person name="Wang C.C."/>
            <person name="Hotta K."/>
            <person name="Watanabe K."/>
        </authorList>
    </citation>
    <scope>FUNCTION</scope>
    <scope>PATHWAY</scope>
</reference>
<protein>
    <recommendedName>
        <fullName evidence="5">Short chain dehydrogenase asqE</fullName>
        <ecNumber evidence="3">1.1.1.1</ecNumber>
    </recommendedName>
    <alternativeName>
        <fullName evidence="6">4'-methoxyviridicatin/aspoquinolone biosynthesis cluster protein asqE</fullName>
    </alternativeName>
    <alternativeName>
        <fullName evidence="5">Aspoquinolone biosynthesis protein E</fullName>
    </alternativeName>
</protein>
<evidence type="ECO:0000250" key="1">
    <source>
        <dbReference type="UniProtKB" id="L0E2Z4"/>
    </source>
</evidence>
<evidence type="ECO:0000250" key="2">
    <source>
        <dbReference type="UniProtKB" id="O93868"/>
    </source>
</evidence>
<evidence type="ECO:0000255" key="3">
    <source>
        <dbReference type="PROSITE-ProRule" id="PRU10001"/>
    </source>
</evidence>
<evidence type="ECO:0000269" key="4">
    <source>
    </source>
</evidence>
<evidence type="ECO:0000303" key="5">
    <source>
    </source>
</evidence>
<evidence type="ECO:0000305" key="6"/>
<evidence type="ECO:0000305" key="7">
    <source>
    </source>
</evidence>
<proteinExistence type="inferred from homology"/>
<dbReference type="EC" id="1.1.1.1" evidence="3"/>
<dbReference type="EMBL" id="BN001306">
    <property type="protein sequence ID" value="CBF82269.1"/>
    <property type="molecule type" value="Genomic_DNA"/>
</dbReference>
<dbReference type="EMBL" id="AACD01000170">
    <property type="protein sequence ID" value="EAA61523.1"/>
    <property type="molecule type" value="Genomic_DNA"/>
</dbReference>
<dbReference type="RefSeq" id="XP_682501.1">
    <property type="nucleotide sequence ID" value="XM_677409.1"/>
</dbReference>
<dbReference type="SMR" id="Q5AR48"/>
<dbReference type="EnsemblFungi" id="CBF82269">
    <property type="protein sequence ID" value="CBF82269"/>
    <property type="gene ID" value="ANIA_09232"/>
</dbReference>
<dbReference type="KEGG" id="ani:ANIA_09232"/>
<dbReference type="eggNOG" id="KOG0725">
    <property type="taxonomic scope" value="Eukaryota"/>
</dbReference>
<dbReference type="HOGENOM" id="CLU_010194_1_3_1"/>
<dbReference type="InParanoid" id="Q5AR48"/>
<dbReference type="OMA" id="KVMQANA"/>
<dbReference type="OrthoDB" id="47007at2759"/>
<dbReference type="Proteomes" id="UP000000560">
    <property type="component" value="Chromosome VI"/>
</dbReference>
<dbReference type="GO" id="GO:0004022">
    <property type="term" value="F:alcohol dehydrogenase (NAD+) activity"/>
    <property type="evidence" value="ECO:0007669"/>
    <property type="project" value="UniProtKB-EC"/>
</dbReference>
<dbReference type="GO" id="GO:0044550">
    <property type="term" value="P:secondary metabolite biosynthetic process"/>
    <property type="evidence" value="ECO:0007669"/>
    <property type="project" value="UniProtKB-ARBA"/>
</dbReference>
<dbReference type="CDD" id="cd05233">
    <property type="entry name" value="SDR_c"/>
    <property type="match status" value="1"/>
</dbReference>
<dbReference type="Gene3D" id="3.40.50.720">
    <property type="entry name" value="NAD(P)-binding Rossmann-like Domain"/>
    <property type="match status" value="1"/>
</dbReference>
<dbReference type="InterPro" id="IPR036291">
    <property type="entry name" value="NAD(P)-bd_dom_sf"/>
</dbReference>
<dbReference type="InterPro" id="IPR020904">
    <property type="entry name" value="Sc_DH/Rdtase_CS"/>
</dbReference>
<dbReference type="InterPro" id="IPR002347">
    <property type="entry name" value="SDR_fam"/>
</dbReference>
<dbReference type="PANTHER" id="PTHR48107">
    <property type="entry name" value="NADPH-DEPENDENT ALDEHYDE REDUCTASE-LIKE PROTEIN, CHLOROPLASTIC-RELATED"/>
    <property type="match status" value="1"/>
</dbReference>
<dbReference type="PANTHER" id="PTHR48107:SF7">
    <property type="entry name" value="RE15974P"/>
    <property type="match status" value="1"/>
</dbReference>
<dbReference type="Pfam" id="PF13561">
    <property type="entry name" value="adh_short_C2"/>
    <property type="match status" value="1"/>
</dbReference>
<dbReference type="PRINTS" id="PR00081">
    <property type="entry name" value="GDHRDH"/>
</dbReference>
<dbReference type="PRINTS" id="PR00080">
    <property type="entry name" value="SDRFAMILY"/>
</dbReference>
<dbReference type="SUPFAM" id="SSF51735">
    <property type="entry name" value="NAD(P)-binding Rossmann-fold domains"/>
    <property type="match status" value="1"/>
</dbReference>
<dbReference type="PROSITE" id="PS00061">
    <property type="entry name" value="ADH_SHORT"/>
    <property type="match status" value="1"/>
</dbReference>
<organism>
    <name type="scientific">Emericella nidulans (strain FGSC A4 / ATCC 38163 / CBS 112.46 / NRRL 194 / M139)</name>
    <name type="common">Aspergillus nidulans</name>
    <dbReference type="NCBI Taxonomy" id="227321"/>
    <lineage>
        <taxon>Eukaryota</taxon>
        <taxon>Fungi</taxon>
        <taxon>Dikarya</taxon>
        <taxon>Ascomycota</taxon>
        <taxon>Pezizomycotina</taxon>
        <taxon>Eurotiomycetes</taxon>
        <taxon>Eurotiomycetidae</taxon>
        <taxon>Eurotiales</taxon>
        <taxon>Aspergillaceae</taxon>
        <taxon>Aspergillus</taxon>
        <taxon>Aspergillus subgen. Nidulantes</taxon>
    </lineage>
</organism>